<comment type="function">
    <text evidence="1">Transfers and isomerizes the ribose moiety from AdoMet to the 7-aminomethyl group of 7-deazaguanine (preQ1-tRNA) to give epoxyqueuosine (oQ-tRNA).</text>
</comment>
<comment type="catalytic activity">
    <reaction evidence="1">
        <text>7-aminomethyl-7-carbaguanosine(34) in tRNA + S-adenosyl-L-methionine = epoxyqueuosine(34) in tRNA + adenine + L-methionine + 2 H(+)</text>
        <dbReference type="Rhea" id="RHEA:32155"/>
        <dbReference type="Rhea" id="RHEA-COMP:10342"/>
        <dbReference type="Rhea" id="RHEA-COMP:18582"/>
        <dbReference type="ChEBI" id="CHEBI:15378"/>
        <dbReference type="ChEBI" id="CHEBI:16708"/>
        <dbReference type="ChEBI" id="CHEBI:57844"/>
        <dbReference type="ChEBI" id="CHEBI:59789"/>
        <dbReference type="ChEBI" id="CHEBI:82833"/>
        <dbReference type="ChEBI" id="CHEBI:194443"/>
        <dbReference type="EC" id="2.4.99.17"/>
    </reaction>
</comment>
<comment type="pathway">
    <text evidence="1">tRNA modification; tRNA-queuosine biosynthesis.</text>
</comment>
<comment type="subunit">
    <text evidence="1">Monomer.</text>
</comment>
<comment type="subcellular location">
    <subcellularLocation>
        <location evidence="1">Cytoplasm</location>
    </subcellularLocation>
</comment>
<comment type="similarity">
    <text evidence="1">Belongs to the QueA family.</text>
</comment>
<keyword id="KW-0963">Cytoplasm</keyword>
<keyword id="KW-0671">Queuosine biosynthesis</keyword>
<keyword id="KW-0949">S-adenosyl-L-methionine</keyword>
<keyword id="KW-0808">Transferase</keyword>
<proteinExistence type="inferred from homology"/>
<feature type="chain" id="PRO_1000015216" description="S-adenosylmethionine:tRNA ribosyltransferase-isomerase">
    <location>
        <begin position="1"/>
        <end position="340"/>
    </location>
</feature>
<organism>
    <name type="scientific">Francisella tularensis subsp. holarctica (strain OSU18)</name>
    <dbReference type="NCBI Taxonomy" id="393011"/>
    <lineage>
        <taxon>Bacteria</taxon>
        <taxon>Pseudomonadati</taxon>
        <taxon>Pseudomonadota</taxon>
        <taxon>Gammaproteobacteria</taxon>
        <taxon>Thiotrichales</taxon>
        <taxon>Francisellaceae</taxon>
        <taxon>Francisella</taxon>
    </lineage>
</organism>
<name>QUEA_FRATO</name>
<gene>
    <name evidence="1" type="primary">queA</name>
    <name type="ordered locus">FTH_0731</name>
</gene>
<reference key="1">
    <citation type="journal article" date="2006" name="J. Bacteriol.">
        <title>Chromosome rearrangement and diversification of Francisella tularensis revealed by the type B (OSU18) genome sequence.</title>
        <authorList>
            <person name="Petrosino J.F."/>
            <person name="Xiang Q."/>
            <person name="Karpathy S.E."/>
            <person name="Jiang H."/>
            <person name="Yerrapragada S."/>
            <person name="Liu Y."/>
            <person name="Gioia J."/>
            <person name="Hemphill L."/>
            <person name="Gonzalez A."/>
            <person name="Raghavan T.M."/>
            <person name="Uzman A."/>
            <person name="Fox G.E."/>
            <person name="Highlander S."/>
            <person name="Reichard M."/>
            <person name="Morton R.J."/>
            <person name="Clinkenbeard K.D."/>
            <person name="Weinstock G.M."/>
        </authorList>
    </citation>
    <scope>NUCLEOTIDE SEQUENCE [LARGE SCALE GENOMIC DNA]</scope>
    <source>
        <strain>OSU18</strain>
    </source>
</reference>
<sequence length="340" mass="38636">MFMKTDDFDYKLPEELIASYPLENRDASRLLKLNKQTGEIADYKFTDFIDFINPGDLLVFNNSKVMLARLYGSKTTGAKLEYLIERIKNPKLFETHIKANRSPAIGSEIYVEDTLAKVLDKDGGMYLLEIQGDKDIYQLMEEFGHIPLPPYMKRDDEEFDAERYQTVYAQDLGSVAALTAGLHFSKELMQQIKDKGVDIAYITLHVGSGTFKPVQVDDVESHKMHAEVISVPVEVCQKIRQTKENGGRVITIGTTSVRSLETAGQNGQIEPYQGETDIFLYPGKKFNVVDAMITNFHLPKSTLIMLVSAFADKEKIIKAYEHAIAERYRFFSYGDAMFIF</sequence>
<protein>
    <recommendedName>
        <fullName evidence="1">S-adenosylmethionine:tRNA ribosyltransferase-isomerase</fullName>
        <ecNumber evidence="1">2.4.99.17</ecNumber>
    </recommendedName>
    <alternativeName>
        <fullName evidence="1">Queuosine biosynthesis protein QueA</fullName>
    </alternativeName>
</protein>
<dbReference type="EC" id="2.4.99.17" evidence="1"/>
<dbReference type="EMBL" id="CP000437">
    <property type="protein sequence ID" value="ABI82678.1"/>
    <property type="molecule type" value="Genomic_DNA"/>
</dbReference>
<dbReference type="SMR" id="Q0BMK6"/>
<dbReference type="KEGG" id="fth:FTH_0731"/>
<dbReference type="UniPathway" id="UPA00392"/>
<dbReference type="GO" id="GO:0005737">
    <property type="term" value="C:cytoplasm"/>
    <property type="evidence" value="ECO:0007669"/>
    <property type="project" value="UniProtKB-SubCell"/>
</dbReference>
<dbReference type="GO" id="GO:0051075">
    <property type="term" value="F:S-adenosylmethionine:tRNA ribosyltransferase-isomerase activity"/>
    <property type="evidence" value="ECO:0007669"/>
    <property type="project" value="UniProtKB-EC"/>
</dbReference>
<dbReference type="GO" id="GO:0008616">
    <property type="term" value="P:queuosine biosynthetic process"/>
    <property type="evidence" value="ECO:0007669"/>
    <property type="project" value="UniProtKB-UniRule"/>
</dbReference>
<dbReference type="GO" id="GO:0002099">
    <property type="term" value="P:tRNA wobble guanine modification"/>
    <property type="evidence" value="ECO:0007669"/>
    <property type="project" value="TreeGrafter"/>
</dbReference>
<dbReference type="FunFam" id="3.40.1780.10:FF:000001">
    <property type="entry name" value="S-adenosylmethionine:tRNA ribosyltransferase-isomerase"/>
    <property type="match status" value="1"/>
</dbReference>
<dbReference type="Gene3D" id="2.40.10.240">
    <property type="entry name" value="QueA-like"/>
    <property type="match status" value="1"/>
</dbReference>
<dbReference type="Gene3D" id="3.40.1780.10">
    <property type="entry name" value="QueA-like"/>
    <property type="match status" value="1"/>
</dbReference>
<dbReference type="HAMAP" id="MF_00113">
    <property type="entry name" value="QueA"/>
    <property type="match status" value="1"/>
</dbReference>
<dbReference type="InterPro" id="IPR003699">
    <property type="entry name" value="QueA"/>
</dbReference>
<dbReference type="InterPro" id="IPR042118">
    <property type="entry name" value="QueA_dom1"/>
</dbReference>
<dbReference type="InterPro" id="IPR042119">
    <property type="entry name" value="QueA_dom2"/>
</dbReference>
<dbReference type="InterPro" id="IPR036100">
    <property type="entry name" value="QueA_sf"/>
</dbReference>
<dbReference type="NCBIfam" id="NF001140">
    <property type="entry name" value="PRK00147.1"/>
    <property type="match status" value="1"/>
</dbReference>
<dbReference type="NCBIfam" id="TIGR00113">
    <property type="entry name" value="queA"/>
    <property type="match status" value="1"/>
</dbReference>
<dbReference type="PANTHER" id="PTHR30307">
    <property type="entry name" value="S-ADENOSYLMETHIONINE:TRNA RIBOSYLTRANSFERASE-ISOMERASE"/>
    <property type="match status" value="1"/>
</dbReference>
<dbReference type="PANTHER" id="PTHR30307:SF0">
    <property type="entry name" value="S-ADENOSYLMETHIONINE:TRNA RIBOSYLTRANSFERASE-ISOMERASE"/>
    <property type="match status" value="1"/>
</dbReference>
<dbReference type="Pfam" id="PF02547">
    <property type="entry name" value="Queuosine_synth"/>
    <property type="match status" value="1"/>
</dbReference>
<dbReference type="SUPFAM" id="SSF111337">
    <property type="entry name" value="QueA-like"/>
    <property type="match status" value="1"/>
</dbReference>
<evidence type="ECO:0000255" key="1">
    <source>
        <dbReference type="HAMAP-Rule" id="MF_00113"/>
    </source>
</evidence>
<accession>Q0BMK6</accession>